<feature type="chain" id="PRO_1000101084" description="Large ribosomal subunit protein bL36">
    <location>
        <begin position="1"/>
        <end position="41"/>
    </location>
</feature>
<gene>
    <name evidence="1" type="primary">rpmJ</name>
    <name type="ordered locus">PXO_00889</name>
</gene>
<keyword id="KW-0687">Ribonucleoprotein</keyword>
<keyword id="KW-0689">Ribosomal protein</keyword>
<dbReference type="EMBL" id="CP000967">
    <property type="protein sequence ID" value="ACD59039.1"/>
    <property type="molecule type" value="Genomic_DNA"/>
</dbReference>
<dbReference type="SMR" id="B2SLH7"/>
<dbReference type="KEGG" id="xop:PXO_00889"/>
<dbReference type="eggNOG" id="COG0257">
    <property type="taxonomic scope" value="Bacteria"/>
</dbReference>
<dbReference type="HOGENOM" id="CLU_135723_3_3_6"/>
<dbReference type="Proteomes" id="UP000001740">
    <property type="component" value="Chromosome"/>
</dbReference>
<dbReference type="GO" id="GO:1990904">
    <property type="term" value="C:ribonucleoprotein complex"/>
    <property type="evidence" value="ECO:0007669"/>
    <property type="project" value="UniProtKB-KW"/>
</dbReference>
<dbReference type="GO" id="GO:0005840">
    <property type="term" value="C:ribosome"/>
    <property type="evidence" value="ECO:0007669"/>
    <property type="project" value="UniProtKB-KW"/>
</dbReference>
<dbReference type="GO" id="GO:0003735">
    <property type="term" value="F:structural constituent of ribosome"/>
    <property type="evidence" value="ECO:0007669"/>
    <property type="project" value="InterPro"/>
</dbReference>
<dbReference type="GO" id="GO:0006412">
    <property type="term" value="P:translation"/>
    <property type="evidence" value="ECO:0007669"/>
    <property type="project" value="UniProtKB-UniRule"/>
</dbReference>
<dbReference type="HAMAP" id="MF_00251">
    <property type="entry name" value="Ribosomal_bL36"/>
    <property type="match status" value="1"/>
</dbReference>
<dbReference type="InterPro" id="IPR000473">
    <property type="entry name" value="Ribosomal_bL36"/>
</dbReference>
<dbReference type="InterPro" id="IPR035977">
    <property type="entry name" value="Ribosomal_bL36_sp"/>
</dbReference>
<dbReference type="InterPro" id="IPR047621">
    <property type="entry name" value="Ribosomal_L36_bact"/>
</dbReference>
<dbReference type="NCBIfam" id="NF002021">
    <property type="entry name" value="PRK00831.1"/>
    <property type="match status" value="1"/>
</dbReference>
<dbReference type="NCBIfam" id="TIGR01022">
    <property type="entry name" value="rpmJ_bact"/>
    <property type="match status" value="1"/>
</dbReference>
<dbReference type="PANTHER" id="PTHR47781">
    <property type="entry name" value="50S RIBOSOMAL PROTEIN L36 2"/>
    <property type="match status" value="1"/>
</dbReference>
<dbReference type="PANTHER" id="PTHR47781:SF1">
    <property type="entry name" value="LARGE RIBOSOMAL SUBUNIT PROTEIN BL36B"/>
    <property type="match status" value="1"/>
</dbReference>
<dbReference type="Pfam" id="PF00444">
    <property type="entry name" value="Ribosomal_L36"/>
    <property type="match status" value="1"/>
</dbReference>
<dbReference type="SUPFAM" id="SSF57840">
    <property type="entry name" value="Ribosomal protein L36"/>
    <property type="match status" value="1"/>
</dbReference>
<dbReference type="PROSITE" id="PS00828">
    <property type="entry name" value="RIBOSOMAL_L36"/>
    <property type="match status" value="1"/>
</dbReference>
<evidence type="ECO:0000255" key="1">
    <source>
        <dbReference type="HAMAP-Rule" id="MF_00251"/>
    </source>
</evidence>
<evidence type="ECO:0000305" key="2"/>
<sequence length="41" mass="4872">MKVLSSLKSAKTRHRDCKVVRRRGKVFVICKSNPRFKARQR</sequence>
<comment type="similarity">
    <text evidence="1">Belongs to the bacterial ribosomal protein bL36 family.</text>
</comment>
<protein>
    <recommendedName>
        <fullName evidence="1">Large ribosomal subunit protein bL36</fullName>
    </recommendedName>
    <alternativeName>
        <fullName evidence="2">50S ribosomal protein L36</fullName>
    </alternativeName>
</protein>
<reference key="1">
    <citation type="journal article" date="2008" name="BMC Genomics">
        <title>Genome sequence and rapid evolution of the rice pathogen Xanthomonas oryzae pv. oryzae PXO99A.</title>
        <authorList>
            <person name="Salzberg S.L."/>
            <person name="Sommer D.D."/>
            <person name="Schatz M.C."/>
            <person name="Phillippy A.M."/>
            <person name="Rabinowicz P.D."/>
            <person name="Tsuge S."/>
            <person name="Furutani A."/>
            <person name="Ochiai H."/>
            <person name="Delcher A.L."/>
            <person name="Kelley D."/>
            <person name="Madupu R."/>
            <person name="Puiu D."/>
            <person name="Radune D."/>
            <person name="Shumway M."/>
            <person name="Trapnell C."/>
            <person name="Aparna G."/>
            <person name="Jha G."/>
            <person name="Pandey A."/>
            <person name="Patil P.B."/>
            <person name="Ishihara H."/>
            <person name="Meyer D.F."/>
            <person name="Szurek B."/>
            <person name="Verdier V."/>
            <person name="Koebnik R."/>
            <person name="Dow J.M."/>
            <person name="Ryan R.P."/>
            <person name="Hirata H."/>
            <person name="Tsuyumu S."/>
            <person name="Won Lee S."/>
            <person name="Seo Y.-S."/>
            <person name="Sriariyanum M."/>
            <person name="Ronald P.C."/>
            <person name="Sonti R.V."/>
            <person name="Van Sluys M.-A."/>
            <person name="Leach J.E."/>
            <person name="White F.F."/>
            <person name="Bogdanove A.J."/>
        </authorList>
    </citation>
    <scope>NUCLEOTIDE SEQUENCE [LARGE SCALE GENOMIC DNA]</scope>
    <source>
        <strain>PXO99A</strain>
    </source>
</reference>
<name>RL36_XANOP</name>
<proteinExistence type="inferred from homology"/>
<accession>B2SLH7</accession>
<organism>
    <name type="scientific">Xanthomonas oryzae pv. oryzae (strain PXO99A)</name>
    <dbReference type="NCBI Taxonomy" id="360094"/>
    <lineage>
        <taxon>Bacteria</taxon>
        <taxon>Pseudomonadati</taxon>
        <taxon>Pseudomonadota</taxon>
        <taxon>Gammaproteobacteria</taxon>
        <taxon>Lysobacterales</taxon>
        <taxon>Lysobacteraceae</taxon>
        <taxon>Xanthomonas</taxon>
    </lineage>
</organism>